<proteinExistence type="inferred from homology"/>
<accession>Q4QMV1</accession>
<evidence type="ECO:0000255" key="1">
    <source>
        <dbReference type="HAMAP-Rule" id="MF_01114"/>
    </source>
</evidence>
<feature type="chain" id="PRO_1000065174" description="Regulatory protein RecX">
    <location>
        <begin position="1"/>
        <end position="152"/>
    </location>
</feature>
<reference key="1">
    <citation type="journal article" date="2005" name="J. Bacteriol.">
        <title>Genomic sequence of an otitis media isolate of nontypeable Haemophilus influenzae: comparative study with H. influenzae serotype d, strain KW20.</title>
        <authorList>
            <person name="Harrison A."/>
            <person name="Dyer D.W."/>
            <person name="Gillaspy A."/>
            <person name="Ray W.C."/>
            <person name="Mungur R."/>
            <person name="Carson M.B."/>
            <person name="Zhong H."/>
            <person name="Gipson J."/>
            <person name="Gipson M."/>
            <person name="Johnson L.S."/>
            <person name="Lewis L."/>
            <person name="Bakaletz L.O."/>
            <person name="Munson R.S. Jr."/>
        </authorList>
    </citation>
    <scope>NUCLEOTIDE SEQUENCE [LARGE SCALE GENOMIC DNA]</scope>
    <source>
        <strain>86-028NP</strain>
    </source>
</reference>
<organism>
    <name type="scientific">Haemophilus influenzae (strain 86-028NP)</name>
    <dbReference type="NCBI Taxonomy" id="281310"/>
    <lineage>
        <taxon>Bacteria</taxon>
        <taxon>Pseudomonadati</taxon>
        <taxon>Pseudomonadota</taxon>
        <taxon>Gammaproteobacteria</taxon>
        <taxon>Pasteurellales</taxon>
        <taxon>Pasteurellaceae</taxon>
        <taxon>Haemophilus</taxon>
    </lineage>
</organism>
<sequence length="152" mass="18188">MSSLAFNYIVNLLSRREYSEFELRNKMQEKNFSEEEIDDALSLCQAKNWQSDRRFSENYLNSRSQKGCGVGRIRQELRQLKGVSSDIIDEVLMESEIDWYEMAENLLRKKFPNYNEQQTSKMKQKIWQYMLSHGFRSDEFADLIGQNQSEWD</sequence>
<protein>
    <recommendedName>
        <fullName evidence="1">Regulatory protein RecX</fullName>
    </recommendedName>
</protein>
<keyword id="KW-0963">Cytoplasm</keyword>
<dbReference type="EMBL" id="CP000057">
    <property type="protein sequence ID" value="AAX87646.1"/>
    <property type="molecule type" value="Genomic_DNA"/>
</dbReference>
<dbReference type="RefSeq" id="WP_011272121.1">
    <property type="nucleotide sequence ID" value="NC_007146.2"/>
</dbReference>
<dbReference type="SMR" id="Q4QMV1"/>
<dbReference type="GeneID" id="93219609"/>
<dbReference type="KEGG" id="hit:NTHI0730"/>
<dbReference type="HOGENOM" id="CLU_066607_3_2_6"/>
<dbReference type="Proteomes" id="UP000002525">
    <property type="component" value="Chromosome"/>
</dbReference>
<dbReference type="GO" id="GO:0005737">
    <property type="term" value="C:cytoplasm"/>
    <property type="evidence" value="ECO:0007669"/>
    <property type="project" value="UniProtKB-SubCell"/>
</dbReference>
<dbReference type="GO" id="GO:0006282">
    <property type="term" value="P:regulation of DNA repair"/>
    <property type="evidence" value="ECO:0007669"/>
    <property type="project" value="UniProtKB-UniRule"/>
</dbReference>
<dbReference type="Gene3D" id="1.10.10.10">
    <property type="entry name" value="Winged helix-like DNA-binding domain superfamily/Winged helix DNA-binding domain"/>
    <property type="match status" value="3"/>
</dbReference>
<dbReference type="HAMAP" id="MF_01114">
    <property type="entry name" value="RecX"/>
    <property type="match status" value="1"/>
</dbReference>
<dbReference type="InterPro" id="IPR053926">
    <property type="entry name" value="RecX_HTH_1st"/>
</dbReference>
<dbReference type="InterPro" id="IPR053924">
    <property type="entry name" value="RecX_HTH_2nd"/>
</dbReference>
<dbReference type="InterPro" id="IPR053925">
    <property type="entry name" value="RecX_HTH_3rd"/>
</dbReference>
<dbReference type="InterPro" id="IPR003783">
    <property type="entry name" value="Regulatory_RecX"/>
</dbReference>
<dbReference type="InterPro" id="IPR036388">
    <property type="entry name" value="WH-like_DNA-bd_sf"/>
</dbReference>
<dbReference type="NCBIfam" id="NF001057">
    <property type="entry name" value="PRK00117.3-3"/>
    <property type="match status" value="1"/>
</dbReference>
<dbReference type="PANTHER" id="PTHR33602">
    <property type="entry name" value="REGULATORY PROTEIN RECX FAMILY PROTEIN"/>
    <property type="match status" value="1"/>
</dbReference>
<dbReference type="PANTHER" id="PTHR33602:SF1">
    <property type="entry name" value="REGULATORY PROTEIN RECX FAMILY PROTEIN"/>
    <property type="match status" value="1"/>
</dbReference>
<dbReference type="Pfam" id="PF21982">
    <property type="entry name" value="RecX_HTH1"/>
    <property type="match status" value="1"/>
</dbReference>
<dbReference type="Pfam" id="PF02631">
    <property type="entry name" value="RecX_HTH2"/>
    <property type="match status" value="1"/>
</dbReference>
<dbReference type="Pfam" id="PF21981">
    <property type="entry name" value="RecX_HTH3"/>
    <property type="match status" value="1"/>
</dbReference>
<comment type="function">
    <text evidence="1">Modulates RecA activity.</text>
</comment>
<comment type="subcellular location">
    <subcellularLocation>
        <location evidence="1">Cytoplasm</location>
    </subcellularLocation>
</comment>
<comment type="similarity">
    <text evidence="1">Belongs to the RecX family.</text>
</comment>
<name>RECX_HAEI8</name>
<gene>
    <name evidence="1" type="primary">recX</name>
    <name type="ordered locus">NTHI0730</name>
</gene>